<feature type="transit peptide" description="Mitochondrion" evidence="4">
    <location>
        <begin position="1"/>
        <end position="23"/>
    </location>
</feature>
<feature type="chain" id="PRO_0000417696" description="Bifunctional dethiobiotin synthetase/7,8-diamino-pelargonic acid aminotransferase, mitochondrial">
    <location>
        <begin position="24"/>
        <end position="833"/>
    </location>
</feature>
<feature type="region of interest" description="Dethiobiotin synthetase" evidence="18">
    <location>
        <begin position="36"/>
        <end position="299"/>
    </location>
</feature>
<feature type="region of interest" description="7,8-diamino-pelargonic acid aminotransferase" evidence="18">
    <location>
        <begin position="332"/>
        <end position="830"/>
    </location>
</feature>
<feature type="binding site" evidence="3">
    <location>
        <begin position="47"/>
        <end position="52"/>
    </location>
    <ligand>
        <name>ATP</name>
        <dbReference type="ChEBI" id="CHEBI:30616"/>
    </ligand>
</feature>
<feature type="binding site" evidence="9 22">
    <location>
        <position position="51"/>
    </location>
    <ligand>
        <name>Mg(2+)</name>
        <dbReference type="ChEBI" id="CHEBI:18420"/>
    </ligand>
</feature>
<feature type="binding site" evidence="9 24">
    <location>
        <position position="81"/>
    </location>
    <ligand>
        <name>substrate</name>
    </ligand>
</feature>
<feature type="binding site" evidence="9 22">
    <location>
        <position position="88"/>
    </location>
    <ligand>
        <name>Mg(2+)</name>
        <dbReference type="ChEBI" id="CHEBI:18420"/>
    </ligand>
</feature>
<feature type="binding site" evidence="3">
    <location>
        <position position="97"/>
    </location>
    <ligand>
        <name>ATP</name>
        <dbReference type="ChEBI" id="CHEBI:30616"/>
    </ligand>
</feature>
<feature type="binding site" evidence="3">
    <location>
        <begin position="210"/>
        <end position="213"/>
    </location>
    <ligand>
        <name>ATP</name>
        <dbReference type="ChEBI" id="CHEBI:30616"/>
    </ligand>
</feature>
<feature type="binding site" evidence="9 22">
    <location>
        <position position="210"/>
    </location>
    <ligand>
        <name>Mg(2+)</name>
        <dbReference type="ChEBI" id="CHEBI:18420"/>
    </ligand>
</feature>
<feature type="binding site" evidence="3">
    <location>
        <begin position="270"/>
        <end position="271"/>
    </location>
    <ligand>
        <name>ATP</name>
        <dbReference type="ChEBI" id="CHEBI:30616"/>
    </ligand>
</feature>
<feature type="binding site" evidence="9 23">
    <location>
        <begin position="391"/>
        <end position="392"/>
    </location>
    <ligand>
        <name>(8S)-8-amino-7-oxononanoate</name>
        <dbReference type="ChEBI" id="CHEBI:149468"/>
    </ligand>
</feature>
<feature type="binding site" evidence="9 22 23 24">
    <location>
        <begin position="453"/>
        <end position="454"/>
    </location>
    <ligand>
        <name>pyridoxal 5'-phosphate</name>
        <dbReference type="ChEBI" id="CHEBI:597326"/>
    </ligand>
</feature>
<feature type="binding site" evidence="9 23">
    <location>
        <position position="495"/>
    </location>
    <ligand>
        <name>(8S)-8-amino-7-oxononanoate</name>
        <dbReference type="ChEBI" id="CHEBI:149468"/>
    </ligand>
</feature>
<feature type="binding site" evidence="3">
    <location>
        <begin position="518"/>
        <end position="520"/>
    </location>
    <ligand>
        <name>ATP</name>
        <dbReference type="ChEBI" id="CHEBI:30616"/>
    </ligand>
</feature>
<feature type="binding site" evidence="3">
    <location>
        <position position="545"/>
    </location>
    <ligand>
        <name>ATP</name>
        <dbReference type="ChEBI" id="CHEBI:30616"/>
    </ligand>
</feature>
<feature type="binding site" evidence="9 22 23 24">
    <location>
        <position position="637"/>
    </location>
    <ligand>
        <name>pyridoxal 5'-phosphate</name>
        <dbReference type="ChEBI" id="CHEBI:597326"/>
    </ligand>
</feature>
<feature type="binding site" evidence="9 23">
    <location>
        <position position="666"/>
    </location>
    <ligand>
        <name>(8S)-8-amino-7-oxononanoate</name>
        <dbReference type="ChEBI" id="CHEBI:149468"/>
    </ligand>
</feature>
<feature type="binding site" evidence="9 23">
    <location>
        <position position="700"/>
    </location>
    <ligand>
        <name>(8S)-8-amino-7-oxononanoate</name>
        <dbReference type="ChEBI" id="CHEBI:149468"/>
    </ligand>
</feature>
<feature type="binding site" evidence="9 22 23 24">
    <location>
        <begin position="701"/>
        <end position="702"/>
    </location>
    <ligand>
        <name>pyridoxal 5'-phosphate</name>
        <dbReference type="ChEBI" id="CHEBI:597326"/>
    </ligand>
</feature>
<feature type="binding site" evidence="9 23">
    <location>
        <position position="797"/>
    </location>
    <ligand>
        <name>(8S)-8-amino-7-oxononanoate</name>
        <dbReference type="ChEBI" id="CHEBI:149468"/>
    </ligand>
</feature>
<feature type="site" description="Participates in the substrate recognition with KAPA and in a stacking interaction with the adenine ring of SAM" evidence="2">
    <location>
        <position position="348"/>
    </location>
</feature>
<feature type="modified residue" description="N6-(pyridoxal phosphate)lysine" evidence="9 21 22 23 24">
    <location>
        <position position="666"/>
    </location>
</feature>
<feature type="splice variant" id="VSP_043884" description="In isoform 3." evidence="14 15 17">
    <location>
        <begin position="1"/>
        <end position="382"/>
    </location>
</feature>
<feature type="splice variant" id="VSP_043885" description="In isoform 5." evidence="18">
    <location>
        <begin position="1"/>
        <end position="321"/>
    </location>
</feature>
<feature type="splice variant" id="VSP_043886" description="In isoform 4." evidence="13">
    <location>
        <begin position="288"/>
        <end position="833"/>
    </location>
</feature>
<feature type="splice variant" id="VSP_043887" description="In isoform 3." evidence="14 15 17">
    <original>QQFDACASWWTQGPDPT</original>
    <variation>MLVQAGGHRGQILLSRL</variation>
    <location>
        <begin position="383"/>
        <end position="399"/>
    </location>
</feature>
<feature type="splice variant" id="VSP_043888" description="In isoform 2." evidence="14 16">
    <original>ELA</original>
    <variation>VSG</variation>
    <location>
        <begin position="403"/>
        <end position="405"/>
    </location>
</feature>
<feature type="splice variant" id="VSP_043889" description="In isoform 2." evidence="14 16">
    <location>
        <begin position="406"/>
        <end position="833"/>
    </location>
</feature>
<feature type="mutagenesis site" description="No important impact on the enzyme kinetic parameters." evidence="9">
    <original>F</original>
    <variation>Y</variation>
    <location>
        <position position="348"/>
    </location>
</feature>
<feature type="mutagenesis site" description="Reduced substrate channeling leading to slower 7,8-diamino-pelargonic acid aminotransferase + dethiobiotin synthetase activities." evidence="9">
    <original>S</original>
    <variation>Y</variation>
    <location>
        <position position="382"/>
    </location>
</feature>
<feature type="mutagenesis site" description="In bio1-1: Arrested embryo." evidence="11">
    <location>
        <begin position="777"/>
        <end position="833"/>
    </location>
</feature>
<feature type="mutagenesis site" description="Reduced substrate channeling leading to slower 7,8-diamino-pelargonic acid aminotransferase + dethiobiotin synthetase activities." evidence="9">
    <original>I</original>
    <variation>W</variation>
    <location>
        <position position="815"/>
    </location>
</feature>
<feature type="sequence conflict" description="In Ref. 6; AAQ62434." evidence="18" ref="6">
    <original>G</original>
    <variation>E</variation>
    <location>
        <position position="236"/>
    </location>
</feature>
<feature type="strand" evidence="26">
    <location>
        <begin position="31"/>
        <end position="33"/>
    </location>
</feature>
<feature type="strand" evidence="26">
    <location>
        <begin position="38"/>
        <end position="48"/>
    </location>
</feature>
<feature type="helix" evidence="26">
    <location>
        <begin position="50"/>
        <end position="62"/>
    </location>
</feature>
<feature type="strand" evidence="26">
    <location>
        <begin position="72"/>
        <end position="80"/>
    </location>
</feature>
<feature type="turn" evidence="26">
    <location>
        <begin position="83"/>
        <end position="85"/>
    </location>
</feature>
<feature type="helix" evidence="26">
    <location>
        <begin position="88"/>
        <end position="103"/>
    </location>
</feature>
<feature type="strand" evidence="26">
    <location>
        <begin position="108"/>
        <end position="117"/>
    </location>
</feature>
<feature type="helix" evidence="26">
    <location>
        <begin position="118"/>
        <end position="124"/>
    </location>
</feature>
<feature type="strand" evidence="26">
    <location>
        <begin position="134"/>
        <end position="144"/>
    </location>
</feature>
<feature type="strand" evidence="26">
    <location>
        <begin position="151"/>
        <end position="159"/>
    </location>
</feature>
<feature type="strand" evidence="26">
    <location>
        <begin position="161"/>
        <end position="164"/>
    </location>
</feature>
<feature type="helix" evidence="26">
    <location>
        <begin position="166"/>
        <end position="172"/>
    </location>
</feature>
<feature type="helix" evidence="26">
    <location>
        <begin position="179"/>
        <end position="193"/>
    </location>
</feature>
<feature type="strand" evidence="26">
    <location>
        <begin position="205"/>
        <end position="210"/>
    </location>
</feature>
<feature type="strand" evidence="25">
    <location>
        <begin position="212"/>
        <end position="214"/>
    </location>
</feature>
<feature type="helix" evidence="26">
    <location>
        <begin position="225"/>
        <end position="228"/>
    </location>
</feature>
<feature type="helix" evidence="26">
    <location>
        <begin position="230"/>
        <end position="232"/>
    </location>
</feature>
<feature type="strand" evidence="26">
    <location>
        <begin position="236"/>
        <end position="239"/>
    </location>
</feature>
<feature type="strand" evidence="25">
    <location>
        <begin position="243"/>
        <end position="245"/>
    </location>
</feature>
<feature type="helix" evidence="26">
    <location>
        <begin position="246"/>
        <end position="258"/>
    </location>
</feature>
<feature type="turn" evidence="26">
    <location>
        <begin position="259"/>
        <end position="261"/>
    </location>
</feature>
<feature type="strand" evidence="26">
    <location>
        <begin position="264"/>
        <end position="270"/>
    </location>
</feature>
<feature type="helix" evidence="26">
    <location>
        <begin position="277"/>
        <end position="283"/>
    </location>
</feature>
<feature type="turn" evidence="26">
    <location>
        <begin position="284"/>
        <end position="286"/>
    </location>
</feature>
<feature type="strand" evidence="26">
    <location>
        <begin position="290"/>
        <end position="293"/>
    </location>
</feature>
<feature type="helix" evidence="26">
    <location>
        <begin position="305"/>
        <end position="310"/>
    </location>
</feature>
<feature type="helix" evidence="26">
    <location>
        <begin position="312"/>
        <end position="343"/>
    </location>
</feature>
<feature type="helix" evidence="26">
    <location>
        <begin position="351"/>
        <end position="353"/>
    </location>
</feature>
<feature type="helix" evidence="26">
    <location>
        <begin position="356"/>
        <end position="358"/>
    </location>
</feature>
<feature type="strand" evidence="26">
    <location>
        <begin position="360"/>
        <end position="366"/>
    </location>
</feature>
<feature type="strand" evidence="26">
    <location>
        <begin position="369"/>
        <end position="374"/>
    </location>
</feature>
<feature type="helix" evidence="26">
    <location>
        <begin position="375"/>
        <end position="378"/>
    </location>
</feature>
<feature type="strand" evidence="26">
    <location>
        <begin position="379"/>
        <end position="386"/>
    </location>
</feature>
<feature type="helix" evidence="26">
    <location>
        <begin position="389"/>
        <end position="392"/>
    </location>
</feature>
<feature type="helix" evidence="26">
    <location>
        <begin position="398"/>
        <end position="415"/>
    </location>
</feature>
<feature type="helix" evidence="26">
    <location>
        <begin position="426"/>
        <end position="437"/>
    </location>
</feature>
<feature type="turn" evidence="26">
    <location>
        <begin position="438"/>
        <end position="443"/>
    </location>
</feature>
<feature type="strand" evidence="26">
    <location>
        <begin position="446"/>
        <end position="452"/>
    </location>
</feature>
<feature type="helix" evidence="26">
    <location>
        <begin position="453"/>
        <end position="470"/>
    </location>
</feature>
<feature type="turn" evidence="26">
    <location>
        <begin position="471"/>
        <end position="473"/>
    </location>
</feature>
<feature type="strand" evidence="26">
    <location>
        <begin position="486"/>
        <end position="491"/>
    </location>
</feature>
<feature type="helix" evidence="26">
    <location>
        <begin position="500"/>
        <end position="504"/>
    </location>
</feature>
<feature type="helix" evidence="26">
    <location>
        <begin position="510"/>
        <end position="512"/>
    </location>
</feature>
<feature type="turn" evidence="26">
    <location>
        <begin position="514"/>
        <end position="516"/>
    </location>
</feature>
<feature type="strand" evidence="26">
    <location>
        <begin position="524"/>
        <end position="527"/>
    </location>
</feature>
<feature type="strand" evidence="26">
    <location>
        <begin position="531"/>
        <end position="535"/>
    </location>
</feature>
<feature type="strand" evidence="26">
    <location>
        <begin position="538"/>
        <end position="542"/>
    </location>
</feature>
<feature type="strand" evidence="26">
    <location>
        <begin position="556"/>
        <end position="558"/>
    </location>
</feature>
<feature type="helix" evidence="26">
    <location>
        <begin position="560"/>
        <end position="564"/>
    </location>
</feature>
<feature type="helix" evidence="26">
    <location>
        <begin position="566"/>
        <end position="570"/>
    </location>
</feature>
<feature type="helix" evidence="26">
    <location>
        <begin position="572"/>
        <end position="584"/>
    </location>
</feature>
<feature type="strand" evidence="26">
    <location>
        <begin position="596"/>
        <end position="602"/>
    </location>
</feature>
<feature type="strand" evidence="26">
    <location>
        <begin position="605"/>
        <end position="607"/>
    </location>
</feature>
<feature type="turn" evidence="26">
    <location>
        <begin position="608"/>
        <end position="611"/>
    </location>
</feature>
<feature type="strand" evidence="26">
    <location>
        <begin position="612"/>
        <end position="615"/>
    </location>
</feature>
<feature type="helix" evidence="26">
    <location>
        <begin position="617"/>
        <end position="629"/>
    </location>
</feature>
<feature type="strand" evidence="26">
    <location>
        <begin position="634"/>
        <end position="637"/>
    </location>
</feature>
<feature type="turn" evidence="26">
    <location>
        <begin position="639"/>
        <end position="646"/>
    </location>
</feature>
<feature type="strand" evidence="26">
    <location>
        <begin position="647"/>
        <end position="650"/>
    </location>
</feature>
<feature type="helix" evidence="26">
    <location>
        <begin position="652"/>
        <end position="655"/>
    </location>
</feature>
<feature type="strand" evidence="26">
    <location>
        <begin position="660"/>
        <end position="664"/>
    </location>
</feature>
<feature type="helix" evidence="26">
    <location>
        <begin position="666"/>
        <end position="669"/>
    </location>
</feature>
<feature type="strand" evidence="26">
    <location>
        <begin position="676"/>
        <end position="680"/>
    </location>
</feature>
<feature type="helix" evidence="26">
    <location>
        <begin position="682"/>
        <end position="686"/>
    </location>
</feature>
<feature type="strand" evidence="27">
    <location>
        <begin position="690"/>
        <end position="692"/>
    </location>
</feature>
<feature type="helix" evidence="26">
    <location>
        <begin position="693"/>
        <end position="695"/>
    </location>
</feature>
<feature type="turn" evidence="26">
    <location>
        <begin position="702"/>
        <end position="705"/>
    </location>
</feature>
<feature type="helix" evidence="26">
    <location>
        <begin position="707"/>
        <end position="721"/>
    </location>
</feature>
<feature type="turn" evidence="26">
    <location>
        <begin position="723"/>
        <end position="725"/>
    </location>
</feature>
<feature type="strand" evidence="26">
    <location>
        <begin position="733"/>
        <end position="736"/>
    </location>
</feature>
<feature type="helix" evidence="26">
    <location>
        <begin position="742"/>
        <end position="750"/>
    </location>
</feature>
<feature type="strand" evidence="25">
    <location>
        <begin position="751"/>
        <end position="753"/>
    </location>
</feature>
<feature type="strand" evidence="26">
    <location>
        <begin position="754"/>
        <end position="760"/>
    </location>
</feature>
<feature type="strand" evidence="26">
    <location>
        <begin position="763"/>
        <end position="768"/>
    </location>
</feature>
<feature type="helix" evidence="26">
    <location>
        <begin position="780"/>
        <end position="791"/>
    </location>
</feature>
<feature type="strand" evidence="26">
    <location>
        <begin position="802"/>
        <end position="806"/>
    </location>
</feature>
<feature type="helix" evidence="26">
    <location>
        <begin position="813"/>
        <end position="827"/>
    </location>
</feature>
<feature type="turn" evidence="26">
    <location>
        <begin position="828"/>
        <end position="830"/>
    </location>
</feature>
<accession>B0F481</accession>
<accession>B0F482</accession>
<accession>Q681L5</accession>
<accession>Q6NQL9</accession>
<accession>Q9FKL4</accession>
<accession>Q9FKL5</accession>
<evidence type="ECO:0000250" key="1"/>
<evidence type="ECO:0000250" key="2">
    <source>
        <dbReference type="UniProtKB" id="P12995"/>
    </source>
</evidence>
<evidence type="ECO:0000250" key="3">
    <source>
        <dbReference type="UniProtKB" id="P13000"/>
    </source>
</evidence>
<evidence type="ECO:0000255" key="4"/>
<evidence type="ECO:0000269" key="5">
    <source>
    </source>
</evidence>
<evidence type="ECO:0000269" key="6">
    <source>
    </source>
</evidence>
<evidence type="ECO:0000269" key="7">
    <source>
    </source>
</evidence>
<evidence type="ECO:0000269" key="8">
    <source>
    </source>
</evidence>
<evidence type="ECO:0000269" key="9">
    <source>
    </source>
</evidence>
<evidence type="ECO:0000269" key="10">
    <source>
    </source>
</evidence>
<evidence type="ECO:0000269" key="11">
    <source>
    </source>
</evidence>
<evidence type="ECO:0000269" key="12">
    <source>
    </source>
</evidence>
<evidence type="ECO:0000303" key="13">
    <source>
    </source>
</evidence>
<evidence type="ECO:0000303" key="14">
    <source>
    </source>
</evidence>
<evidence type="ECO:0000303" key="15">
    <source ref="2"/>
</evidence>
<evidence type="ECO:0000303" key="16">
    <source ref="3"/>
</evidence>
<evidence type="ECO:0000303" key="17">
    <source ref="7"/>
</evidence>
<evidence type="ECO:0000305" key="18"/>
<evidence type="ECO:0000312" key="19">
    <source>
        <dbReference type="Araport" id="AT5G57590"/>
    </source>
</evidence>
<evidence type="ECO:0000312" key="20">
    <source>
        <dbReference type="EMBL" id="BAB08794.1"/>
    </source>
</evidence>
<evidence type="ECO:0007744" key="21">
    <source>
        <dbReference type="PDB" id="4A0F"/>
    </source>
</evidence>
<evidence type="ECO:0007744" key="22">
    <source>
        <dbReference type="PDB" id="4A0G"/>
    </source>
</evidence>
<evidence type="ECO:0007744" key="23">
    <source>
        <dbReference type="PDB" id="4A0H"/>
    </source>
</evidence>
<evidence type="ECO:0007744" key="24">
    <source>
        <dbReference type="PDB" id="4A0R"/>
    </source>
</evidence>
<evidence type="ECO:0007829" key="25">
    <source>
        <dbReference type="PDB" id="4A0F"/>
    </source>
</evidence>
<evidence type="ECO:0007829" key="26">
    <source>
        <dbReference type="PDB" id="4A0G"/>
    </source>
</evidence>
<evidence type="ECO:0007829" key="27">
    <source>
        <dbReference type="PDB" id="4A0R"/>
    </source>
</evidence>
<reference key="1">
    <citation type="journal article" date="2008" name="Plant Physiol.">
        <title>A bifunctional locus (BIO3-BIO1) required for biotin biosynthesis in Arabidopsis.</title>
        <authorList>
            <person name="Muralla R."/>
            <person name="Chen E."/>
            <person name="Sweeney C."/>
            <person name="Gray J.A."/>
            <person name="Dickerman A."/>
            <person name="Nikolau B.J."/>
            <person name="Meinke D."/>
        </authorList>
    </citation>
    <scope>NUCLEOTIDE SEQUENCE [MRNA] (ISOFORMS 1; 2 AND 3)</scope>
    <scope>ALTERNATIVE SPLICING</scope>
    <scope>FUNCTION</scope>
    <scope>DISRUPTION PHENOTYPE</scope>
    <source>
        <strain>cv. Columbia</strain>
    </source>
</reference>
<reference key="2">
    <citation type="submission" date="2006-10" db="EMBL/GenBank/DDBJ databases">
        <title>Arabidopsis thaliana 7,8-diaminopelargonic acid aminotransferase (AtbioA) mRNA.</title>
        <authorList>
            <person name="Alban C."/>
            <person name="Pinon V."/>
        </authorList>
    </citation>
    <scope>NUCLEOTIDE SEQUENCE [MRNA] (ISOFORM 3)</scope>
    <source>
        <strain>cv. Columbia</strain>
    </source>
</reference>
<reference key="3">
    <citation type="submission" date="2011-01" db="EMBL/GenBank/DDBJ databases">
        <title>cDNA sequences for BIO3-BIO1 from Arabidopsis.</title>
        <authorList>
            <person name="Alban C."/>
            <person name="Pautre V."/>
        </authorList>
    </citation>
    <scope>NUCLEOTIDE SEQUENCE [MRNA] (ISOFORMS 1 AND 2)</scope>
    <source>
        <strain>cv. Columbia</strain>
    </source>
</reference>
<reference key="4">
    <citation type="journal article" date="1998" name="DNA Res.">
        <title>Structural analysis of Arabidopsis thaliana chromosome 5. V. Sequence features of the regions of 1,381,565 bp covered by twenty one physically assigned P1 and TAC clones.</title>
        <authorList>
            <person name="Kaneko T."/>
            <person name="Kotani H."/>
            <person name="Nakamura Y."/>
            <person name="Sato S."/>
            <person name="Asamizu E."/>
            <person name="Miyajima N."/>
            <person name="Tabata S."/>
        </authorList>
    </citation>
    <scope>NUCLEOTIDE SEQUENCE [LARGE SCALE GENOMIC DNA]</scope>
    <source>
        <strain>cv. Columbia</strain>
    </source>
</reference>
<reference key="5">
    <citation type="journal article" date="2017" name="Plant J.">
        <title>Araport11: a complete reannotation of the Arabidopsis thaliana reference genome.</title>
        <authorList>
            <person name="Cheng C.Y."/>
            <person name="Krishnakumar V."/>
            <person name="Chan A.P."/>
            <person name="Thibaud-Nissen F."/>
            <person name="Schobel S."/>
            <person name="Town C.D."/>
        </authorList>
    </citation>
    <scope>GENOME REANNOTATION</scope>
    <source>
        <strain>cv. Columbia</strain>
    </source>
</reference>
<reference key="6">
    <citation type="journal article" date="2003" name="Science">
        <title>Empirical analysis of transcriptional activity in the Arabidopsis genome.</title>
        <authorList>
            <person name="Yamada K."/>
            <person name="Lim J."/>
            <person name="Dale J.M."/>
            <person name="Chen H."/>
            <person name="Shinn P."/>
            <person name="Palm C.J."/>
            <person name="Southwick A.M."/>
            <person name="Wu H.C."/>
            <person name="Kim C.J."/>
            <person name="Nguyen M."/>
            <person name="Pham P.K."/>
            <person name="Cheuk R.F."/>
            <person name="Karlin-Newmann G."/>
            <person name="Liu S.X."/>
            <person name="Lam B."/>
            <person name="Sakano H."/>
            <person name="Wu T."/>
            <person name="Yu G."/>
            <person name="Miranda M."/>
            <person name="Quach H.L."/>
            <person name="Tripp M."/>
            <person name="Chang C.H."/>
            <person name="Lee J.M."/>
            <person name="Toriumi M.J."/>
            <person name="Chan M.M."/>
            <person name="Tang C.C."/>
            <person name="Onodera C.S."/>
            <person name="Deng J.M."/>
            <person name="Akiyama K."/>
            <person name="Ansari Y."/>
            <person name="Arakawa T."/>
            <person name="Banh J."/>
            <person name="Banno F."/>
            <person name="Bowser L."/>
            <person name="Brooks S.Y."/>
            <person name="Carninci P."/>
            <person name="Chao Q."/>
            <person name="Choy N."/>
            <person name="Enju A."/>
            <person name="Goldsmith A.D."/>
            <person name="Gurjal M."/>
            <person name="Hansen N.F."/>
            <person name="Hayashizaki Y."/>
            <person name="Johnson-Hopson C."/>
            <person name="Hsuan V.W."/>
            <person name="Iida K."/>
            <person name="Karnes M."/>
            <person name="Khan S."/>
            <person name="Koesema E."/>
            <person name="Ishida J."/>
            <person name="Jiang P.X."/>
            <person name="Jones T."/>
            <person name="Kawai J."/>
            <person name="Kamiya A."/>
            <person name="Meyers C."/>
            <person name="Nakajima M."/>
            <person name="Narusaka M."/>
            <person name="Seki M."/>
            <person name="Sakurai T."/>
            <person name="Satou M."/>
            <person name="Tamse R."/>
            <person name="Vaysberg M."/>
            <person name="Wallender E.K."/>
            <person name="Wong C."/>
            <person name="Yamamura Y."/>
            <person name="Yuan S."/>
            <person name="Shinozaki K."/>
            <person name="Davis R.W."/>
            <person name="Theologis A."/>
            <person name="Ecker J.R."/>
        </authorList>
    </citation>
    <scope>NUCLEOTIDE SEQUENCE [LARGE SCALE MRNA] (ISOFORM 4)</scope>
    <source>
        <strain>cv. Columbia</strain>
    </source>
</reference>
<reference key="7">
    <citation type="submission" date="2004-09" db="EMBL/GenBank/DDBJ databases">
        <title>Large-scale analysis of RIKEN Arabidopsis full-length (RAFL) cDNAs.</title>
        <authorList>
            <person name="Totoki Y."/>
            <person name="Seki M."/>
            <person name="Ishida J."/>
            <person name="Nakajima M."/>
            <person name="Enju A."/>
            <person name="Kamiya A."/>
            <person name="Narusaka M."/>
            <person name="Shin-i T."/>
            <person name="Nakagawa M."/>
            <person name="Sakamoto N."/>
            <person name="Oishi K."/>
            <person name="Kohara Y."/>
            <person name="Kobayashi M."/>
            <person name="Toyoda A."/>
            <person name="Sakaki Y."/>
            <person name="Sakurai T."/>
            <person name="Iida K."/>
            <person name="Akiyama K."/>
            <person name="Satou M."/>
            <person name="Toyoda T."/>
            <person name="Konagaya A."/>
            <person name="Carninci P."/>
            <person name="Kawai J."/>
            <person name="Hayashizaki Y."/>
            <person name="Shinozaki K."/>
        </authorList>
    </citation>
    <scope>NUCLEOTIDE SEQUENCE [LARGE SCALE MRNA] (ISOFORM 3)</scope>
    <source>
        <strain>cv. Columbia</strain>
    </source>
</reference>
<reference key="8">
    <citation type="journal article" date="1989" name="Dev. Biol.">
        <title>An embryo-lethal mutant of Arabidopsis thaliana is a biotin auxotroph.</title>
        <authorList>
            <person name="Schneider T."/>
            <person name="Dinkins R."/>
            <person name="Robinson K."/>
            <person name="Shellhammer J."/>
            <person name="Meinke D.W."/>
        </authorList>
    </citation>
    <scope>FUNCTION</scope>
    <scope>MUTAGENESIS OF 777-TYR--THR-833</scope>
</reference>
<reference key="9">
    <citation type="journal article" date="1990" name="Plant Physiol.">
        <title>Arrested embryos from the bio1 auxotroph of Arabidopsis thaliana contain reduced levels of biotin.</title>
        <authorList>
            <person name="Shellhammer J."/>
            <person name="Meinke D."/>
        </authorList>
    </citation>
    <scope>FUNCTION</scope>
</reference>
<reference key="10">
    <citation type="journal article" date="1996" name="Mol. Gen. Genet.">
        <title>Complementation of an Arabidopsis thaliana biotin auxotroph with an Escherichia coli biotin biosynthetic gene.</title>
        <authorList>
            <person name="Patton D.A."/>
            <person name="Volrath S."/>
            <person name="Ward E.R."/>
        </authorList>
    </citation>
    <scope>FUNCTION</scope>
</reference>
<reference key="11">
    <citation type="journal article" date="2001" name="Genetics">
        <title>Insertional mutagenesis of genes required for seed development in Arabidopsis thaliana.</title>
        <authorList>
            <person name="McElver J."/>
            <person name="Tzafrir I."/>
            <person name="Aux G."/>
            <person name="Rogers R."/>
            <person name="Ashby C."/>
            <person name="Smith K."/>
            <person name="Thomas C."/>
            <person name="Schetter A."/>
            <person name="Zhou Q."/>
            <person name="Cushman M.A."/>
            <person name="Tossberg J."/>
            <person name="Nickle T."/>
            <person name="Levin J.Z."/>
            <person name="Law M."/>
            <person name="Meinke D."/>
            <person name="Patton D."/>
        </authorList>
    </citation>
    <scope>DISRUPTION PHENOTYPE</scope>
</reference>
<reference key="12">
    <citation type="journal article" date="2003" name="Plant Physiol.">
        <title>The role of biotin in regulating 3-methylcrotonyl-coenzyme a carboxylase expression in Arabidopsis.</title>
        <authorList>
            <person name="Che P."/>
            <person name="Weaver L.M."/>
            <person name="Wurtele E.S."/>
            <person name="Nikolau B.J."/>
        </authorList>
    </citation>
    <scope>FUNCTION</scope>
    <scope>DISRUPTION PHENOTYPE</scope>
</reference>
<reference key="13">
    <citation type="journal article" date="2013" name="Plant J.">
        <title>SUCROSE TRANSPORTER 5 supplies Arabidopsis embryos with biotin and affects triacylglycerol accumulation.</title>
        <authorList>
            <person name="Pommerrenig B."/>
            <person name="Popko J."/>
            <person name="Heilmann M."/>
            <person name="Schulmeister S."/>
            <person name="Dietel K."/>
            <person name="Schmitt B."/>
            <person name="Stadler R."/>
            <person name="Feussner I."/>
            <person name="Sauer N."/>
        </authorList>
    </citation>
    <scope>FUNCTION</scope>
    <scope>DISRUPTION PHENOTYPE</scope>
</reference>
<reference key="14">
    <citation type="journal article" date="2012" name="Plant Cell">
        <title>Biochemical and structural characterization of the Arabidopsis bifunctional enzyme dethiobiotin synthetase-diaminopelargonic acid aminotransferase: evidence for substrate channeling in biotin synthesis.</title>
        <authorList>
            <person name="Cobessi D."/>
            <person name="Dumas R."/>
            <person name="Pautre V."/>
            <person name="Meinguet C."/>
            <person name="Ferrer J.-L."/>
            <person name="Alban C."/>
        </authorList>
    </citation>
    <scope>X-RAY CRYSTALLOGRAPHY (2.50 ANGSTROMS) OF 23-833 IN COMPLEX WITH (4R,5S)-DETHIOBIOTIN; 7-KETO-8-AMINOPELARGONIC ACID; L-TARTARIC ACID AND PYRIDOXAL PHOSPHATE</scope>
    <scope>FUNCTION</scope>
    <scope>MUTAGENESIS OF PHE-348; SER-382 AND ILE-815</scope>
    <scope>CATALYTIC ACTIVITY</scope>
    <scope>SUBCELLULAR LOCATION</scope>
    <scope>PATHWAY</scope>
    <scope>COFACTOR</scope>
    <scope>ALTERNATIVE SPLICING</scope>
    <scope>SUBUNIT</scope>
    <scope>BIOPHYSICOCHEMICAL PROPERTIES</scope>
    <source>
        <strain>cv. Columbia</strain>
    </source>
</reference>
<sequence>MIPVTATLIRHRLRHLRHRIRFKSTSVSPFHLPLNHPTYLIWSANTSLGKTLVSTGIAASFLLQQPSSSATKLLYLKPIQTGFPSDSDSRFVFSKLDSLSLRRQIPISISNSVLHSSLPAAKSLGLNVEVSESGMCSLNFRDEKTVTGAPELLCKTLYAWEAAISPHLAAERENATVEDSVVLQMIEKCLKEEMECGVKSEKSDLLCLVETAGGVASPGPSGTLQCDLYRPFRLPGILVGDGRLGGISGTIAAYESLKLRGYDIAAVVFEDHGLVNEVPLTSYLRNKVPVLVLPPVPKDPSDDLIEWFVESDGVFKALKETMVLANLERLERLNGMAKLAGEVFWWPFTQHKLVHQETVTVIDSRCGENFSIYKASDNSSLSQQFDACASWWTQGPDPTFQAELAREMGYTAARFGHVMFPENVYEPALKCAELLLDGVGKGWASRVYFSDNGSTAIEIALKMAFRKFCVDHNFCEATEEEKHIVVKVIALRGSYHGDTLGAMEAQAPSPYTGFLQQPWYTGRGLFLDPPTVFLSNGSWNISLPESFSEIAPEYGTFTSRDEIFDKSRDASTLARIYSAYLSKHLQEHSGVRQSAHVGALIIEPVIHGAGGMHMVDPLFQRVLVNECRNRKIPVIFDEVFTGFWRLGVETTTELLGCKPDIACFAKLLTGGMVPLAVTLATDAVFDSFSGDSKLKALLHGHSYSAHAMGCATAAKAIQWFKDPETNHNITSQGKTLRELWDEELVQQISSHSAVQRVVVIGTLFALELKADASNSGYASLYAKSLLIMLREDGIFTRPLGNVIYLMCGPCTSPEICRRLLTKLYKRLGEFNRT</sequence>
<protein>
    <recommendedName>
        <fullName>Bifunctional dethiobiotin synthetase/7,8-diamino-pelargonic acid aminotransferase, mitochondrial</fullName>
    </recommendedName>
    <alternativeName>
        <fullName evidence="14">Bifunctional BIO3-BIO1 protein</fullName>
    </alternativeName>
    <domain>
        <recommendedName>
            <fullName>Dethiobiotin synthetase</fullName>
            <ecNumber evidence="9">6.3.3.3</ecNumber>
        </recommendedName>
        <alternativeName>
            <fullName>DTB synthetase</fullName>
            <shortName>DTBS</shortName>
        </alternativeName>
        <alternativeName>
            <fullName evidence="14">Protein BIOTIN AUXOTROPH 3</fullName>
        </alternativeName>
    </domain>
    <domain>
        <recommendedName>
            <fullName>7,8-diamino-pelargonic acid aminotransferase</fullName>
            <shortName>DAPA AT</shortName>
            <shortName>DAPA aminotransferase</shortName>
        </recommendedName>
        <alternativeName>
            <fullName>7,8-diaminononanoate synthase</fullName>
            <shortName>DANS</shortName>
        </alternativeName>
        <alternativeName>
            <fullName>Adenosylmethionine-8-amino-7-oxononanoate aminotransferase</fullName>
            <ecNumber evidence="9">2.6.1.62</ecNumber>
        </alternativeName>
        <alternativeName>
            <fullName>Diaminopelargonic acid synthase</fullName>
        </alternativeName>
        <alternativeName>
            <fullName evidence="14">Protein BIOTIN AUXOTROPH 1</fullName>
        </alternativeName>
    </domain>
</protein>
<name>BIODA_ARATH</name>
<dbReference type="EC" id="6.3.3.3" evidence="9"/>
<dbReference type="EC" id="2.6.1.62" evidence="9"/>
<dbReference type="EMBL" id="EU089963">
    <property type="protein sequence ID" value="ABW80569.1"/>
    <property type="molecule type" value="mRNA"/>
</dbReference>
<dbReference type="EMBL" id="EU090805">
    <property type="protein sequence ID" value="ABU50828.1"/>
    <property type="molecule type" value="mRNA"/>
</dbReference>
<dbReference type="EMBL" id="EU090805">
    <property type="protein sequence ID" value="ABU50829.1"/>
    <property type="molecule type" value="mRNA"/>
</dbReference>
<dbReference type="EMBL" id="EF081156">
    <property type="protein sequence ID" value="ABN80998.1"/>
    <property type="molecule type" value="mRNA"/>
</dbReference>
<dbReference type="EMBL" id="HQ857557">
    <property type="protein sequence ID" value="AEW48251.1"/>
    <property type="molecule type" value="mRNA"/>
</dbReference>
<dbReference type="EMBL" id="HQ857558">
    <property type="protein sequence ID" value="AEW48252.1"/>
    <property type="molecule type" value="mRNA"/>
</dbReference>
<dbReference type="EMBL" id="AB011482">
    <property type="protein sequence ID" value="BAB08794.1"/>
    <property type="status" value="ALT_SEQ"/>
    <property type="molecule type" value="Genomic_DNA"/>
</dbReference>
<dbReference type="EMBL" id="AB011482">
    <property type="protein sequence ID" value="BAB08795.1"/>
    <property type="status" value="ALT_SEQ"/>
    <property type="molecule type" value="Genomic_DNA"/>
</dbReference>
<dbReference type="EMBL" id="CP002688">
    <property type="protein sequence ID" value="AED96924.1"/>
    <property type="molecule type" value="Genomic_DNA"/>
</dbReference>
<dbReference type="EMBL" id="BT010433">
    <property type="protein sequence ID" value="AAQ62434.1"/>
    <property type="molecule type" value="mRNA"/>
</dbReference>
<dbReference type="EMBL" id="AK175602">
    <property type="protein sequence ID" value="BAD43365.1"/>
    <property type="molecule type" value="mRNA"/>
</dbReference>
<dbReference type="RefSeq" id="NP_200567.2">
    <molecule id="B0F481-1"/>
    <property type="nucleotide sequence ID" value="NM_125140.4"/>
</dbReference>
<dbReference type="PDB" id="4A0F">
    <property type="method" value="X-ray"/>
    <property type="resolution" value="2.71 A"/>
    <property type="chains" value="A/B=23-833"/>
</dbReference>
<dbReference type="PDB" id="4A0G">
    <property type="method" value="X-ray"/>
    <property type="resolution" value="2.50 A"/>
    <property type="chains" value="A/B/C/D=23-833"/>
</dbReference>
<dbReference type="PDB" id="4A0H">
    <property type="method" value="X-ray"/>
    <property type="resolution" value="2.81 A"/>
    <property type="chains" value="A/B=23-833"/>
</dbReference>
<dbReference type="PDB" id="4A0R">
    <property type="method" value="X-ray"/>
    <property type="resolution" value="2.68 A"/>
    <property type="chains" value="A/B=23-833"/>
</dbReference>
<dbReference type="PDBsum" id="4A0F"/>
<dbReference type="PDBsum" id="4A0G"/>
<dbReference type="PDBsum" id="4A0H"/>
<dbReference type="PDBsum" id="4A0R"/>
<dbReference type="SMR" id="B0F481"/>
<dbReference type="FunCoup" id="B0F481">
    <property type="interactions" value="657"/>
</dbReference>
<dbReference type="STRING" id="3702.B0F481"/>
<dbReference type="PaxDb" id="3702-AT5G57590.1"/>
<dbReference type="ProteomicsDB" id="240795">
    <molecule id="B0F481-1"/>
</dbReference>
<dbReference type="EnsemblPlants" id="AT5G57590.1">
    <molecule id="B0F481-1"/>
    <property type="protein sequence ID" value="AT5G57590.1"/>
    <property type="gene ID" value="AT5G57590"/>
</dbReference>
<dbReference type="GeneID" id="835863"/>
<dbReference type="Gramene" id="AT5G57590.1">
    <molecule id="B0F481-1"/>
    <property type="protein sequence ID" value="AT5G57590.1"/>
    <property type="gene ID" value="AT5G57590"/>
</dbReference>
<dbReference type="KEGG" id="ath:AT5G57590"/>
<dbReference type="Araport" id="AT5G57590"/>
<dbReference type="TAIR" id="AT5G57590">
    <property type="gene designation" value="BIO1"/>
</dbReference>
<dbReference type="eggNOG" id="KOG1401">
    <property type="taxonomic scope" value="Eukaryota"/>
</dbReference>
<dbReference type="HOGENOM" id="CLU_010794_0_0_1"/>
<dbReference type="InParanoid" id="B0F481"/>
<dbReference type="OMA" id="KGWASRA"/>
<dbReference type="OrthoDB" id="425114at2759"/>
<dbReference type="PhylomeDB" id="B0F481"/>
<dbReference type="BioCyc" id="MetaCyc:MONOMER-8566"/>
<dbReference type="BRENDA" id="2.6.1.62">
    <property type="organism ID" value="399"/>
</dbReference>
<dbReference type="BRENDA" id="6.3.3.3">
    <property type="organism ID" value="399"/>
</dbReference>
<dbReference type="UniPathway" id="UPA00078">
    <property type="reaction ID" value="UER00160"/>
</dbReference>
<dbReference type="UniPathway" id="UPA00078">
    <property type="reaction ID" value="UER00161"/>
</dbReference>
<dbReference type="EvolutionaryTrace" id="B0F481"/>
<dbReference type="PRO" id="PR:B0F481"/>
<dbReference type="Proteomes" id="UP000006548">
    <property type="component" value="Chromosome 5"/>
</dbReference>
<dbReference type="ExpressionAtlas" id="B0F481">
    <property type="expression patterns" value="baseline and differential"/>
</dbReference>
<dbReference type="GO" id="GO:0005759">
    <property type="term" value="C:mitochondrial matrix"/>
    <property type="evidence" value="ECO:0000314"/>
    <property type="project" value="UniProtKB"/>
</dbReference>
<dbReference type="GO" id="GO:0005739">
    <property type="term" value="C:mitochondrion"/>
    <property type="evidence" value="ECO:0000314"/>
    <property type="project" value="TAIR"/>
</dbReference>
<dbReference type="GO" id="GO:0004015">
    <property type="term" value="F:adenosylmethionine-8-amino-7-oxononanoate transaminase activity"/>
    <property type="evidence" value="ECO:0000314"/>
    <property type="project" value="TAIR"/>
</dbReference>
<dbReference type="GO" id="GO:0005524">
    <property type="term" value="F:ATP binding"/>
    <property type="evidence" value="ECO:0007669"/>
    <property type="project" value="UniProtKB-KW"/>
</dbReference>
<dbReference type="GO" id="GO:0004141">
    <property type="term" value="F:dethiobiotin synthase activity"/>
    <property type="evidence" value="ECO:0000314"/>
    <property type="project" value="TAIR"/>
</dbReference>
<dbReference type="GO" id="GO:0000287">
    <property type="term" value="F:magnesium ion binding"/>
    <property type="evidence" value="ECO:0007669"/>
    <property type="project" value="InterPro"/>
</dbReference>
<dbReference type="GO" id="GO:0042803">
    <property type="term" value="F:protein homodimerization activity"/>
    <property type="evidence" value="ECO:0000314"/>
    <property type="project" value="UniProtKB"/>
</dbReference>
<dbReference type="GO" id="GO:0030170">
    <property type="term" value="F:pyridoxal phosphate binding"/>
    <property type="evidence" value="ECO:0007669"/>
    <property type="project" value="InterPro"/>
</dbReference>
<dbReference type="GO" id="GO:0009102">
    <property type="term" value="P:biotin biosynthetic process"/>
    <property type="evidence" value="ECO:0000314"/>
    <property type="project" value="TAIR"/>
</dbReference>
<dbReference type="CDD" id="cd03109">
    <property type="entry name" value="DTBS"/>
    <property type="match status" value="1"/>
</dbReference>
<dbReference type="FunFam" id="3.40.640.10:FF:000088">
    <property type="entry name" value="Bifunctional dethiobiotin synthetase/7,8-diamino-pelargonic acid aminotransferase"/>
    <property type="match status" value="1"/>
</dbReference>
<dbReference type="FunFam" id="3.40.50.300:FF:001675">
    <property type="entry name" value="Bifunctional dethiobiotin synthetase/7,8-diamino-pelargonic acid aminotransferase, mitochondrial"/>
    <property type="match status" value="1"/>
</dbReference>
<dbReference type="FunFam" id="3.90.1150.10:FF:000090">
    <property type="entry name" value="Bifunctional dethiobiotin synthetase/7,8-diamino-pelargonic acid aminotransferase, mitochondrial"/>
    <property type="match status" value="1"/>
</dbReference>
<dbReference type="Gene3D" id="3.90.1150.10">
    <property type="entry name" value="Aspartate Aminotransferase, domain 1"/>
    <property type="match status" value="1"/>
</dbReference>
<dbReference type="Gene3D" id="3.40.50.300">
    <property type="entry name" value="P-loop containing nucleotide triphosphate hydrolases"/>
    <property type="match status" value="1"/>
</dbReference>
<dbReference type="Gene3D" id="3.40.640.10">
    <property type="entry name" value="Type I PLP-dependent aspartate aminotransferase-like (Major domain)"/>
    <property type="match status" value="1"/>
</dbReference>
<dbReference type="HAMAP" id="MF_00336">
    <property type="entry name" value="BioD"/>
    <property type="match status" value="1"/>
</dbReference>
<dbReference type="InterPro" id="IPR005814">
    <property type="entry name" value="Aminotrans_3"/>
</dbReference>
<dbReference type="InterPro" id="IPR049704">
    <property type="entry name" value="Aminotrans_3_PPA_site"/>
</dbReference>
<dbReference type="InterPro" id="IPR004472">
    <property type="entry name" value="DTB_synth_BioD"/>
</dbReference>
<dbReference type="InterPro" id="IPR027417">
    <property type="entry name" value="P-loop_NTPase"/>
</dbReference>
<dbReference type="InterPro" id="IPR015424">
    <property type="entry name" value="PyrdxlP-dep_Trfase"/>
</dbReference>
<dbReference type="InterPro" id="IPR015421">
    <property type="entry name" value="PyrdxlP-dep_Trfase_major"/>
</dbReference>
<dbReference type="InterPro" id="IPR015422">
    <property type="entry name" value="PyrdxlP-dep_Trfase_small"/>
</dbReference>
<dbReference type="PANTHER" id="PTHR42684">
    <property type="entry name" value="ADENOSYLMETHIONINE-8-AMINO-7-OXONONANOATE AMINOTRANSFERASE"/>
    <property type="match status" value="1"/>
</dbReference>
<dbReference type="PANTHER" id="PTHR42684:SF3">
    <property type="entry name" value="ADENOSYLMETHIONINE-8-AMINO-7-OXONONANOATE AMINOTRANSFERASE"/>
    <property type="match status" value="1"/>
</dbReference>
<dbReference type="Pfam" id="PF13500">
    <property type="entry name" value="AAA_26"/>
    <property type="match status" value="1"/>
</dbReference>
<dbReference type="Pfam" id="PF00202">
    <property type="entry name" value="Aminotran_3"/>
    <property type="match status" value="2"/>
</dbReference>
<dbReference type="SUPFAM" id="SSF52540">
    <property type="entry name" value="P-loop containing nucleoside triphosphate hydrolases"/>
    <property type="match status" value="1"/>
</dbReference>
<dbReference type="SUPFAM" id="SSF53383">
    <property type="entry name" value="PLP-dependent transferases"/>
    <property type="match status" value="1"/>
</dbReference>
<dbReference type="PROSITE" id="PS00600">
    <property type="entry name" value="AA_TRANSFER_CLASS_3"/>
    <property type="match status" value="1"/>
</dbReference>
<comment type="function">
    <text evidence="6 8 9 10">Bifunctional enzyme that catalyzes two different reactions involved in the biotin biosynthesis.</text>
</comment>
<comment type="function">
    <text evidence="1 7 8 9 11 12">Catalyzes a mechanistically unusual reaction, the ATP-dependent insertion of CO2 between the N7 and N8 nitrogen atoms of 7,8-diaminopelargonic acid (DAPA) to form an ureido ring.</text>
</comment>
<comment type="function">
    <text evidence="9">Catalyzes the transfer of the alpha-amino group from S-adenosyl-L-methionine (SAM) to 7-keto-8-aminopelargonic acid (KAPA) to form 7,8-diaminopelargonic acid (DAPA). It is the only aminotransferase known to utilize SAM as an amino donor.</text>
</comment>
<comment type="catalytic activity">
    <reaction evidence="9">
        <text>(7R,8S)-7,8-diammoniononanoate + CO2 + ATP = (4R,5S)-dethiobiotin + ADP + phosphate + 3 H(+)</text>
        <dbReference type="Rhea" id="RHEA:15805"/>
        <dbReference type="ChEBI" id="CHEBI:15378"/>
        <dbReference type="ChEBI" id="CHEBI:16526"/>
        <dbReference type="ChEBI" id="CHEBI:30616"/>
        <dbReference type="ChEBI" id="CHEBI:43474"/>
        <dbReference type="ChEBI" id="CHEBI:149469"/>
        <dbReference type="ChEBI" id="CHEBI:149473"/>
        <dbReference type="ChEBI" id="CHEBI:456216"/>
        <dbReference type="EC" id="6.3.3.3"/>
    </reaction>
</comment>
<comment type="catalytic activity">
    <reaction evidence="9">
        <text>(8S)-8-amino-7-oxononanoate + S-adenosyl-L-methionine = S-adenosyl-4-methylsulfanyl-2-oxobutanoate + (7R,8S)-7,8-diammoniononanoate</text>
        <dbReference type="Rhea" id="RHEA:16861"/>
        <dbReference type="ChEBI" id="CHEBI:16490"/>
        <dbReference type="ChEBI" id="CHEBI:59789"/>
        <dbReference type="ChEBI" id="CHEBI:149468"/>
        <dbReference type="ChEBI" id="CHEBI:149469"/>
        <dbReference type="EC" id="2.6.1.62"/>
    </reaction>
</comment>
<comment type="cofactor">
    <cofactor evidence="9">
        <name>Mg(2+)</name>
        <dbReference type="ChEBI" id="CHEBI:18420"/>
    </cofactor>
</comment>
<comment type="cofactor">
    <cofactor evidence="9">
        <name>pyridoxal 5'-phosphate</name>
        <dbReference type="ChEBI" id="CHEBI:597326"/>
    </cofactor>
</comment>
<comment type="biophysicochemical properties">
    <absorption>
        <max evidence="9">415 nm</max>
        <text evidence="9">Shoulder at 335 nm (at pH 7.5 and 30 degrees Celsius).</text>
    </absorption>
    <kinetics>
        <text evidence="9">kcat is 0.072 min(-1) for 7,8-diamino-pelargonic acid aminotransferase + dethiobiotin synthetase activities, and 1.85 min(-1) for 7,8-diamino-pelargonic acid aminotransferase activity only (at pH 7.5 and 30 degrees Celsius).</text>
    </kinetics>
</comment>
<comment type="pathway">
    <text evidence="9">Cofactor biosynthesis; biotin biosynthesis; biotin from 7,8-diaminononanoate: step 1/2.</text>
</comment>
<comment type="pathway">
    <text evidence="9">Cofactor biosynthesis; biotin biosynthesis; 7,8-diaminononanoate from 8-amino-7-oxononanoate (SAM route): step 1/1.</text>
</comment>
<comment type="subunit">
    <text evidence="9">Homodimer.</text>
</comment>
<comment type="subcellular location">
    <subcellularLocation>
        <location evidence="9">Mitochondrion matrix</location>
    </subcellularLocation>
</comment>
<comment type="alternative products">
    <event type="alternative splicing"/>
    <isoform>
        <id>B0F481-1</id>
        <name>1</name>
        <name>BIO3-BIO1</name>
        <sequence type="displayed"/>
    </isoform>
    <isoform>
        <id>B0F481-2</id>
        <name>2</name>
        <name>BIO3 long</name>
        <sequence type="described" ref="VSP_043888 VSP_043889"/>
    </isoform>
    <isoform>
        <id>B0F481-3</id>
        <name>3</name>
        <name>BIO1 short</name>
        <sequence type="described" ref="VSP_043884 VSP_043887"/>
    </isoform>
    <isoform>
        <id>B0F481-4</id>
        <name>4</name>
        <name>BIO3 short</name>
        <sequence type="described" ref="VSP_043886"/>
    </isoform>
    <isoform>
        <id>B0F481-5</id>
        <name>5</name>
        <name>BIO1 long</name>
        <sequence type="described" ref="VSP_043885"/>
    </isoform>
    <text evidence="9">Only the isoform BIO3-BIO1 is detected at protein level in mitochondria.</text>
</comment>
<comment type="disruption phenotype">
    <text evidence="5 6 8 10">Arrested embryos at the transition to cotyledon stages of development (PubMed:11779812, PubMed:17993549). Biotin depletion leading to lethality; this phenotype is rescued by exogenous supply of biotin (PubMed:12644697, PubMed:23031218).</text>
</comment>
<comment type="miscellaneous">
    <molecule>Isoform 2</molecule>
    <text evidence="18">May be due to a competing acceptor splice site.</text>
</comment>
<comment type="miscellaneous">
    <molecule>Isoform 3</molecule>
    <text evidence="18">May be due to a competing acceptor splice site.</text>
</comment>
<comment type="miscellaneous">
    <molecule>Isoform 4</molecule>
    <text evidence="18">May be due to an intron retention.</text>
</comment>
<comment type="similarity">
    <text evidence="18">In the N-terminal section; belongs to the dethiobiotin synthetase family.</text>
</comment>
<comment type="similarity">
    <text evidence="18">In the C-terminal section; belongs to the class-III pyridoxal-phosphate-dependent aminotransferase family. BioA subfamily.</text>
</comment>
<comment type="sequence caution" evidence="18">
    <conflict type="erroneous gene model prediction">
        <sequence resource="EMBL-CDS" id="BAB08794"/>
    </conflict>
    <text>Was originally thought to correspond to two different genes At5g57590 and At5g57600.</text>
</comment>
<comment type="sequence caution" evidence="18">
    <conflict type="erroneous gene model prediction">
        <sequence resource="EMBL-CDS" id="BAB08795"/>
    </conflict>
    <text>Was originally thought to correspond to two different genes At5g57590 and At5g57600.</text>
</comment>
<comment type="online information" name="Seed defective Arabidopsis mutants">
    <link uri="http://seedgenes.org/MutantList"/>
</comment>
<gene>
    <name evidence="14" type="primary">BIO3-BIO1</name>
    <name evidence="14" type="synonym">BIO1</name>
    <name evidence="14" type="synonym">BIO3</name>
    <name evidence="19" type="ordered locus">At5g57590</name>
    <name evidence="20" type="ORF">MUA2.17/MUA2.18</name>
</gene>
<proteinExistence type="evidence at protein level"/>
<keyword id="KW-0002">3D-structure</keyword>
<keyword id="KW-0025">Alternative splicing</keyword>
<keyword id="KW-0032">Aminotransferase</keyword>
<keyword id="KW-0067">ATP-binding</keyword>
<keyword id="KW-0093">Biotin biosynthesis</keyword>
<keyword id="KW-0436">Ligase</keyword>
<keyword id="KW-0460">Magnesium</keyword>
<keyword id="KW-0479">Metal-binding</keyword>
<keyword id="KW-0496">Mitochondrion</keyword>
<keyword id="KW-0511">Multifunctional enzyme</keyword>
<keyword id="KW-0547">Nucleotide-binding</keyword>
<keyword id="KW-0663">Pyridoxal phosphate</keyword>
<keyword id="KW-1185">Reference proteome</keyword>
<keyword id="KW-0949">S-adenosyl-L-methionine</keyword>
<keyword id="KW-0808">Transferase</keyword>
<keyword id="KW-0809">Transit peptide</keyword>
<organism>
    <name type="scientific">Arabidopsis thaliana</name>
    <name type="common">Mouse-ear cress</name>
    <dbReference type="NCBI Taxonomy" id="3702"/>
    <lineage>
        <taxon>Eukaryota</taxon>
        <taxon>Viridiplantae</taxon>
        <taxon>Streptophyta</taxon>
        <taxon>Embryophyta</taxon>
        <taxon>Tracheophyta</taxon>
        <taxon>Spermatophyta</taxon>
        <taxon>Magnoliopsida</taxon>
        <taxon>eudicotyledons</taxon>
        <taxon>Gunneridae</taxon>
        <taxon>Pentapetalae</taxon>
        <taxon>rosids</taxon>
        <taxon>malvids</taxon>
        <taxon>Brassicales</taxon>
        <taxon>Brassicaceae</taxon>
        <taxon>Camelineae</taxon>
        <taxon>Arabidopsis</taxon>
    </lineage>
</organism>